<dbReference type="EC" id="1.97.1.12" evidence="1"/>
<dbReference type="EMBL" id="BA000019">
    <property type="protein sequence ID" value="BAB76853.1"/>
    <property type="molecule type" value="Genomic_DNA"/>
</dbReference>
<dbReference type="PIR" id="AB2450">
    <property type="entry name" value="AB2450"/>
</dbReference>
<dbReference type="RefSeq" id="WP_010999280.1">
    <property type="nucleotide sequence ID" value="NZ_RSCN01000052.1"/>
</dbReference>
<dbReference type="PDB" id="6JEO">
    <property type="method" value="EM"/>
    <property type="resolution" value="3.30 A"/>
    <property type="chains" value="aA/bA/cA/dA=1-752"/>
</dbReference>
<dbReference type="PDB" id="6K61">
    <property type="method" value="EM"/>
    <property type="resolution" value="2.37 A"/>
    <property type="chains" value="A/a=1-752"/>
</dbReference>
<dbReference type="PDB" id="6TCL">
    <property type="method" value="EM"/>
    <property type="resolution" value="3.20 A"/>
    <property type="chains" value="A/A1/A2/AA=12-751"/>
</dbReference>
<dbReference type="PDB" id="7Y3F">
    <property type="method" value="EM"/>
    <property type="resolution" value="2.62 A"/>
    <property type="chains" value="A=1-752"/>
</dbReference>
<dbReference type="PDBsum" id="6JEO"/>
<dbReference type="PDBsum" id="6K61"/>
<dbReference type="PDBsum" id="6TCL"/>
<dbReference type="PDBsum" id="7Y3F"/>
<dbReference type="EMDB" id="EMD-10461"/>
<dbReference type="EMDB" id="EMD-33593"/>
<dbReference type="EMDB" id="EMD-9807"/>
<dbReference type="EMDB" id="EMD-9918"/>
<dbReference type="SMR" id="P58576"/>
<dbReference type="STRING" id="103690.gene:10497213"/>
<dbReference type="KEGG" id="ana:alr5154"/>
<dbReference type="eggNOG" id="COG2885">
    <property type="taxonomic scope" value="Bacteria"/>
</dbReference>
<dbReference type="OrthoDB" id="499313at2"/>
<dbReference type="Proteomes" id="UP000002483">
    <property type="component" value="Chromosome"/>
</dbReference>
<dbReference type="GO" id="GO:0009522">
    <property type="term" value="C:photosystem I"/>
    <property type="evidence" value="ECO:0007669"/>
    <property type="project" value="UniProtKB-KW"/>
</dbReference>
<dbReference type="GO" id="GO:0031676">
    <property type="term" value="C:plasma membrane-derived thylakoid membrane"/>
    <property type="evidence" value="ECO:0007669"/>
    <property type="project" value="UniProtKB-SubCell"/>
</dbReference>
<dbReference type="GO" id="GO:0051539">
    <property type="term" value="F:4 iron, 4 sulfur cluster binding"/>
    <property type="evidence" value="ECO:0007669"/>
    <property type="project" value="UniProtKB-KW"/>
</dbReference>
<dbReference type="GO" id="GO:0016168">
    <property type="term" value="F:chlorophyll binding"/>
    <property type="evidence" value="ECO:0007669"/>
    <property type="project" value="UniProtKB-KW"/>
</dbReference>
<dbReference type="GO" id="GO:0009055">
    <property type="term" value="F:electron transfer activity"/>
    <property type="evidence" value="ECO:0007669"/>
    <property type="project" value="UniProtKB-UniRule"/>
</dbReference>
<dbReference type="GO" id="GO:0000287">
    <property type="term" value="F:magnesium ion binding"/>
    <property type="evidence" value="ECO:0007669"/>
    <property type="project" value="UniProtKB-UniRule"/>
</dbReference>
<dbReference type="GO" id="GO:0016491">
    <property type="term" value="F:oxidoreductase activity"/>
    <property type="evidence" value="ECO:0007669"/>
    <property type="project" value="UniProtKB-KW"/>
</dbReference>
<dbReference type="GO" id="GO:0015979">
    <property type="term" value="P:photosynthesis"/>
    <property type="evidence" value="ECO:0007669"/>
    <property type="project" value="UniProtKB-UniRule"/>
</dbReference>
<dbReference type="Gene3D" id="1.20.1130.10">
    <property type="entry name" value="Photosystem I PsaA/PsaB"/>
    <property type="match status" value="1"/>
</dbReference>
<dbReference type="HAMAP" id="MF_00458">
    <property type="entry name" value="PSI_PsaA"/>
    <property type="match status" value="1"/>
</dbReference>
<dbReference type="InterPro" id="IPR006243">
    <property type="entry name" value="PSI_PsaA"/>
</dbReference>
<dbReference type="InterPro" id="IPR001280">
    <property type="entry name" value="PSI_PsaA/B"/>
</dbReference>
<dbReference type="InterPro" id="IPR020586">
    <property type="entry name" value="PSI_PsaA/B_CS"/>
</dbReference>
<dbReference type="InterPro" id="IPR036408">
    <property type="entry name" value="PSI_PsaA/B_sf"/>
</dbReference>
<dbReference type="NCBIfam" id="TIGR01335">
    <property type="entry name" value="psaA"/>
    <property type="match status" value="1"/>
</dbReference>
<dbReference type="PANTHER" id="PTHR30128">
    <property type="entry name" value="OUTER MEMBRANE PROTEIN, OMPA-RELATED"/>
    <property type="match status" value="1"/>
</dbReference>
<dbReference type="PANTHER" id="PTHR30128:SF19">
    <property type="entry name" value="PHOTOSYSTEM I P700 CHLOROPHYLL A APOPROTEIN A1-RELATED"/>
    <property type="match status" value="1"/>
</dbReference>
<dbReference type="Pfam" id="PF00223">
    <property type="entry name" value="PsaA_PsaB"/>
    <property type="match status" value="1"/>
</dbReference>
<dbReference type="PIRSF" id="PIRSF002905">
    <property type="entry name" value="PSI_A"/>
    <property type="match status" value="1"/>
</dbReference>
<dbReference type="PRINTS" id="PR00257">
    <property type="entry name" value="PHOTSYSPSAAB"/>
</dbReference>
<dbReference type="SUPFAM" id="SSF81558">
    <property type="entry name" value="Photosystem I subunits PsaA/PsaB"/>
    <property type="match status" value="1"/>
</dbReference>
<dbReference type="PROSITE" id="PS00419">
    <property type="entry name" value="PHOTOSYSTEM_I_PSAAB"/>
    <property type="match status" value="1"/>
</dbReference>
<gene>
    <name evidence="1" type="primary">psaA</name>
    <name type="ordered locus">alr5154</name>
</gene>
<sequence length="752" mass="83200">MTISPPEREEKKARVIVDKDPVPTSFEKWAQPGHFDRTLARGPKTTTWIWNLHALAHDFDTHTSDLEDISRKIFAAHFGHLAVVTIWLSGMIFHGAKFSNYEAWLSDPLNVRPSAQVVWPIVGQDILNGDVGGGFHGIQITSGLFQVWRGWGITNSFQLYCTAIGGLVLAGLFLFAGWFHYHKRAPKLEWFQNVESMLNHHLQVLLGCGSLGWAGHLIHVSAPINKLMDAGVAVKDIPLPHEFILNKSLLIDLFPGFAAGLTPFFTLNWGQYADFLTFKGGLNPVTGGLWMTDIAHHHLAIAVVFIIAGHQYRTNWGIGHSIKEILENHKGPFTGEGHKGLYENLTTSWHAQLATNLAFLGSLTIIIAHHMYAMPPYPYLATDYATQLCIFTHHIWIGGFLIVGGAAHAAIFMVRDYDPVVNQNNVLDRVIRHRDAIISHLNWVCIFLGFHSFGLYIHNDTMRALGRPQDMFSDTAIQLQPVFAQWVQNLHTLAPGGTAPNALEPVSYAFGGGVLAVGGKVAMMPIALGTADFLIHHIHAFTIHVTVLILLKGVLFARSSRLIPDKANLGFRFPCDGPGRGGTCQVSGWDHVFLGLFWMYNSLSIVIFHFSWKMQSDVWGTVDAAGNVSHITGGNFAQSAITINGWLRDFLWAQASQVINSYGSALSAYGLMFLGAHFVWAFSLMFLFSGRGYWQELIESIVWAHNKLKVAPAIQPRALSITQGRAVGVAHYLLGGIATTWAFFHAHILSVG</sequence>
<proteinExistence type="evidence at protein level"/>
<keyword id="KW-0002">3D-structure</keyword>
<keyword id="KW-0004">4Fe-4S</keyword>
<keyword id="KW-0148">Chlorophyll</keyword>
<keyword id="KW-0157">Chromophore</keyword>
<keyword id="KW-0249">Electron transport</keyword>
<keyword id="KW-0408">Iron</keyword>
<keyword id="KW-0411">Iron-sulfur</keyword>
<keyword id="KW-0460">Magnesium</keyword>
<keyword id="KW-0472">Membrane</keyword>
<keyword id="KW-0479">Metal-binding</keyword>
<keyword id="KW-0560">Oxidoreductase</keyword>
<keyword id="KW-0602">Photosynthesis</keyword>
<keyword id="KW-0603">Photosystem I</keyword>
<keyword id="KW-1185">Reference proteome</keyword>
<keyword id="KW-0793">Thylakoid</keyword>
<keyword id="KW-0812">Transmembrane</keyword>
<keyword id="KW-1133">Transmembrane helix</keyword>
<keyword id="KW-0813">Transport</keyword>
<protein>
    <recommendedName>
        <fullName evidence="1">Photosystem I P700 chlorophyll a apoprotein A1</fullName>
        <ecNumber evidence="1">1.97.1.12</ecNumber>
    </recommendedName>
    <alternativeName>
        <fullName evidence="1">PsaA</fullName>
    </alternativeName>
</protein>
<evidence type="ECO:0000255" key="1">
    <source>
        <dbReference type="HAMAP-Rule" id="MF_00458"/>
    </source>
</evidence>
<evidence type="ECO:0007829" key="2">
    <source>
        <dbReference type="PDB" id="6K61"/>
    </source>
</evidence>
<evidence type="ECO:0007829" key="3">
    <source>
        <dbReference type="PDB" id="7Y3F"/>
    </source>
</evidence>
<organism>
    <name type="scientific">Nostoc sp. (strain PCC 7120 / SAG 25.82 / UTEX 2576)</name>
    <dbReference type="NCBI Taxonomy" id="103690"/>
    <lineage>
        <taxon>Bacteria</taxon>
        <taxon>Bacillati</taxon>
        <taxon>Cyanobacteriota</taxon>
        <taxon>Cyanophyceae</taxon>
        <taxon>Nostocales</taxon>
        <taxon>Nostocaceae</taxon>
        <taxon>Nostoc</taxon>
    </lineage>
</organism>
<feature type="chain" id="PRO_0000088583" description="Photosystem I P700 chlorophyll a apoprotein A1">
    <location>
        <begin position="1"/>
        <end position="752"/>
    </location>
</feature>
<feature type="transmembrane region" description="Helical; Name=I" evidence="1">
    <location>
        <begin position="73"/>
        <end position="96"/>
    </location>
</feature>
<feature type="transmembrane region" description="Helical; Name=II" evidence="1">
    <location>
        <begin position="159"/>
        <end position="182"/>
    </location>
</feature>
<feature type="transmembrane region" description="Helical; Name=III" evidence="1">
    <location>
        <begin position="198"/>
        <end position="222"/>
    </location>
</feature>
<feature type="transmembrane region" description="Helical; Name=IV" evidence="1">
    <location>
        <begin position="294"/>
        <end position="312"/>
    </location>
</feature>
<feature type="transmembrane region" description="Helical; Name=V" evidence="1">
    <location>
        <begin position="349"/>
        <end position="372"/>
    </location>
</feature>
<feature type="transmembrane region" description="Helical; Name=VI" evidence="1">
    <location>
        <begin position="388"/>
        <end position="414"/>
    </location>
</feature>
<feature type="transmembrane region" description="Helical; Name=VII" evidence="1">
    <location>
        <begin position="436"/>
        <end position="458"/>
    </location>
</feature>
<feature type="transmembrane region" description="Helical; Name=VIII" evidence="1">
    <location>
        <begin position="533"/>
        <end position="551"/>
    </location>
</feature>
<feature type="transmembrane region" description="Helical; Name=IX" evidence="1">
    <location>
        <begin position="591"/>
        <end position="612"/>
    </location>
</feature>
<feature type="transmembrane region" description="Helical; Name=X" evidence="1">
    <location>
        <begin position="666"/>
        <end position="688"/>
    </location>
</feature>
<feature type="transmembrane region" description="Helical; Name=XI" evidence="1">
    <location>
        <begin position="726"/>
        <end position="746"/>
    </location>
</feature>
<feature type="binding site" evidence="1">
    <location>
        <position position="575"/>
    </location>
    <ligand>
        <name>[4Fe-4S] cluster</name>
        <dbReference type="ChEBI" id="CHEBI:49883"/>
        <note>ligand shared between dimeric partners</note>
    </ligand>
</feature>
<feature type="binding site" evidence="1">
    <location>
        <position position="584"/>
    </location>
    <ligand>
        <name>[4Fe-4S] cluster</name>
        <dbReference type="ChEBI" id="CHEBI:49883"/>
        <note>ligand shared between dimeric partners</note>
    </ligand>
</feature>
<feature type="binding site" description="axial binding residue" evidence="1">
    <location>
        <position position="677"/>
    </location>
    <ligand>
        <name>chlorophyll a'</name>
        <dbReference type="ChEBI" id="CHEBI:189419"/>
        <label>A1</label>
    </ligand>
    <ligandPart>
        <name>Mg</name>
        <dbReference type="ChEBI" id="CHEBI:25107"/>
    </ligandPart>
</feature>
<feature type="binding site" description="axial binding residue" evidence="1">
    <location>
        <position position="685"/>
    </location>
    <ligand>
        <name>chlorophyll a</name>
        <dbReference type="ChEBI" id="CHEBI:58416"/>
        <label>A3</label>
    </ligand>
    <ligandPart>
        <name>Mg</name>
        <dbReference type="ChEBI" id="CHEBI:25107"/>
    </ligandPart>
</feature>
<feature type="binding site" evidence="1">
    <location>
        <position position="693"/>
    </location>
    <ligand>
        <name>chlorophyll a</name>
        <dbReference type="ChEBI" id="CHEBI:58416"/>
        <label>A3</label>
    </ligand>
</feature>
<feature type="binding site" evidence="1">
    <location>
        <position position="694"/>
    </location>
    <ligand>
        <name>phylloquinone</name>
        <dbReference type="ChEBI" id="CHEBI:18067"/>
        <label>A</label>
    </ligand>
</feature>
<feature type="strand" evidence="2">
    <location>
        <begin position="17"/>
        <end position="20"/>
    </location>
</feature>
<feature type="helix" evidence="2">
    <location>
        <begin position="27"/>
        <end position="30"/>
    </location>
</feature>
<feature type="turn" evidence="3">
    <location>
        <begin position="32"/>
        <end position="35"/>
    </location>
</feature>
<feature type="turn" evidence="2">
    <location>
        <begin position="37"/>
        <end position="41"/>
    </location>
</feature>
<feature type="helix" evidence="2">
    <location>
        <begin position="47"/>
        <end position="54"/>
    </location>
</feature>
<feature type="helix" evidence="2">
    <location>
        <begin position="59"/>
        <end position="62"/>
    </location>
</feature>
<feature type="helix" evidence="2">
    <location>
        <begin position="66"/>
        <end position="97"/>
    </location>
</feature>
<feature type="helix" evidence="2">
    <location>
        <begin position="101"/>
        <end position="106"/>
    </location>
</feature>
<feature type="turn" evidence="2">
    <location>
        <begin position="108"/>
        <end position="110"/>
    </location>
</feature>
<feature type="strand" evidence="3">
    <location>
        <begin position="114"/>
        <end position="116"/>
    </location>
</feature>
<feature type="helix" evidence="2">
    <location>
        <begin position="124"/>
        <end position="127"/>
    </location>
</feature>
<feature type="strand" evidence="2">
    <location>
        <begin position="128"/>
        <end position="130"/>
    </location>
</feature>
<feature type="strand" evidence="2">
    <location>
        <begin position="132"/>
        <end position="134"/>
    </location>
</feature>
<feature type="strand" evidence="2">
    <location>
        <begin position="136"/>
        <end position="139"/>
    </location>
</feature>
<feature type="helix" evidence="2">
    <location>
        <begin position="144"/>
        <end position="150"/>
    </location>
</feature>
<feature type="helix" evidence="2">
    <location>
        <begin position="156"/>
        <end position="182"/>
    </location>
</feature>
<feature type="strand" evidence="2">
    <location>
        <begin position="184"/>
        <end position="186"/>
    </location>
</feature>
<feature type="helix" evidence="2">
    <location>
        <begin position="188"/>
        <end position="191"/>
    </location>
</feature>
<feature type="helix" evidence="2">
    <location>
        <begin position="194"/>
        <end position="203"/>
    </location>
</feature>
<feature type="turn" evidence="2">
    <location>
        <begin position="204"/>
        <end position="206"/>
    </location>
</feature>
<feature type="helix" evidence="2">
    <location>
        <begin position="207"/>
        <end position="219"/>
    </location>
</feature>
<feature type="helix" evidence="2">
    <location>
        <begin position="221"/>
        <end position="230"/>
    </location>
</feature>
<feature type="strand" evidence="2">
    <location>
        <begin position="234"/>
        <end position="237"/>
    </location>
</feature>
<feature type="helix" evidence="2">
    <location>
        <begin position="240"/>
        <end position="242"/>
    </location>
</feature>
<feature type="helix" evidence="2">
    <location>
        <begin position="248"/>
        <end position="253"/>
    </location>
</feature>
<feature type="helix" evidence="2">
    <location>
        <begin position="255"/>
        <end position="259"/>
    </location>
</feature>
<feature type="helix" evidence="2">
    <location>
        <begin position="262"/>
        <end position="265"/>
    </location>
</feature>
<feature type="helix" evidence="2">
    <location>
        <begin position="269"/>
        <end position="274"/>
    </location>
</feature>
<feature type="turn" evidence="2">
    <location>
        <begin position="284"/>
        <end position="286"/>
    </location>
</feature>
<feature type="helix" evidence="2">
    <location>
        <begin position="291"/>
        <end position="308"/>
    </location>
</feature>
<feature type="strand" evidence="3">
    <location>
        <begin position="314"/>
        <end position="317"/>
    </location>
</feature>
<feature type="helix" evidence="2">
    <location>
        <begin position="322"/>
        <end position="328"/>
    </location>
</feature>
<feature type="strand" evidence="2">
    <location>
        <begin position="332"/>
        <end position="334"/>
    </location>
</feature>
<feature type="turn" evidence="2">
    <location>
        <begin position="335"/>
        <end position="340"/>
    </location>
</feature>
<feature type="helix" evidence="2">
    <location>
        <begin position="341"/>
        <end position="347"/>
    </location>
</feature>
<feature type="helix" evidence="2">
    <location>
        <begin position="349"/>
        <end position="373"/>
    </location>
</feature>
<feature type="helix" evidence="2">
    <location>
        <begin position="384"/>
        <end position="415"/>
    </location>
</feature>
<feature type="turn" evidence="2">
    <location>
        <begin position="419"/>
        <end position="421"/>
    </location>
</feature>
<feature type="strand" evidence="2">
    <location>
        <begin position="422"/>
        <end position="425"/>
    </location>
</feature>
<feature type="helix" evidence="2">
    <location>
        <begin position="426"/>
        <end position="431"/>
    </location>
</feature>
<feature type="helix" evidence="2">
    <location>
        <begin position="434"/>
        <end position="464"/>
    </location>
</feature>
<feature type="helix" evidence="2">
    <location>
        <begin position="468"/>
        <end position="470"/>
    </location>
</feature>
<feature type="strand" evidence="2">
    <location>
        <begin position="471"/>
        <end position="473"/>
    </location>
</feature>
<feature type="helix" evidence="2">
    <location>
        <begin position="482"/>
        <end position="492"/>
    </location>
</feature>
<feature type="turn" evidence="2">
    <location>
        <begin position="496"/>
        <end position="498"/>
    </location>
</feature>
<feature type="turn" evidence="2">
    <location>
        <begin position="508"/>
        <end position="510"/>
    </location>
</feature>
<feature type="strand" evidence="2">
    <location>
        <begin position="515"/>
        <end position="517"/>
    </location>
</feature>
<feature type="strand" evidence="2">
    <location>
        <begin position="520"/>
        <end position="523"/>
    </location>
</feature>
<feature type="helix" evidence="2">
    <location>
        <begin position="530"/>
        <end position="555"/>
    </location>
</feature>
<feature type="helix" evidence="2">
    <location>
        <begin position="566"/>
        <end position="569"/>
    </location>
</feature>
<feature type="helix" evidence="2">
    <location>
        <begin position="588"/>
        <end position="617"/>
    </location>
</feature>
<feature type="strand" evidence="2">
    <location>
        <begin position="620"/>
        <end position="622"/>
    </location>
</feature>
<feature type="strand" evidence="2">
    <location>
        <begin position="624"/>
        <end position="626"/>
    </location>
</feature>
<feature type="strand" evidence="2">
    <location>
        <begin position="628"/>
        <end position="632"/>
    </location>
</feature>
<feature type="helix" evidence="2">
    <location>
        <begin position="636"/>
        <end position="639"/>
    </location>
</feature>
<feature type="helix" evidence="2">
    <location>
        <begin position="643"/>
        <end position="654"/>
    </location>
</feature>
<feature type="helix" evidence="2">
    <location>
        <begin position="656"/>
        <end position="659"/>
    </location>
</feature>
<feature type="helix" evidence="2">
    <location>
        <begin position="667"/>
        <end position="688"/>
    </location>
</feature>
<feature type="helix" evidence="2">
    <location>
        <begin position="691"/>
        <end position="707"/>
    </location>
</feature>
<feature type="strand" evidence="2">
    <location>
        <begin position="713"/>
        <end position="715"/>
    </location>
</feature>
<feature type="helix" evidence="2">
    <location>
        <begin position="721"/>
        <end position="751"/>
    </location>
</feature>
<comment type="function">
    <text evidence="1">PsaA and PsaB bind P700, the primary electron donor of photosystem I (PSI), as well as the electron acceptors A0, A1 and FX. PSI is a plastocyanin/cytochrome c6-ferredoxin oxidoreductase, converting photonic excitation into a charge separation, which transfers an electron from the donor P700 chlorophyll pair to the spectroscopically characterized acceptors A0, A1, FX, FA and FB in turn. Oxidized P700 is reduced on the lumenal side of the thylakoid membrane by plastocyanin or cytochrome c6.</text>
</comment>
<comment type="catalytic activity">
    <reaction evidence="1">
        <text>reduced [plastocyanin] + hnu + oxidized [2Fe-2S]-[ferredoxin] = oxidized [plastocyanin] + reduced [2Fe-2S]-[ferredoxin]</text>
        <dbReference type="Rhea" id="RHEA:30407"/>
        <dbReference type="Rhea" id="RHEA-COMP:10000"/>
        <dbReference type="Rhea" id="RHEA-COMP:10001"/>
        <dbReference type="Rhea" id="RHEA-COMP:10039"/>
        <dbReference type="Rhea" id="RHEA-COMP:10040"/>
        <dbReference type="ChEBI" id="CHEBI:29036"/>
        <dbReference type="ChEBI" id="CHEBI:30212"/>
        <dbReference type="ChEBI" id="CHEBI:33737"/>
        <dbReference type="ChEBI" id="CHEBI:33738"/>
        <dbReference type="ChEBI" id="CHEBI:49552"/>
        <dbReference type="EC" id="1.97.1.12"/>
    </reaction>
</comment>
<comment type="cofactor">
    <text evidence="1">PSI electron transfer chain: 5 chlorophyll a, 1 chlorophyll a', 2 phylloquinones and 3 4Fe-4S clusters. PSI core antenna: 90 chlorophyll a, 22 carotenoids, 3 phospholipids and 1 galactolipid. P700 is a chlorophyll a/chlorophyll a' dimer, A0 is one or more chlorophyll a, A1 is one or both phylloquinones and FX is a shared 4Fe-4S iron-sulfur center.</text>
</comment>
<comment type="subunit">
    <text evidence="1">The PsaA/B heterodimer binds the P700 chlorophyll special pair and subsequent electron acceptors. PSI consists of a core antenna complex that captures photons, and an electron transfer chain that converts photonic excitation into a charge separation. The cyanobacterial PSI reaction center is composed of one copy each of PsaA,B,C,D,E,F,I,J,K,L,M and X, and forms trimeric complexes.</text>
</comment>
<comment type="subcellular location">
    <subcellularLocation>
        <location evidence="1">Cellular thylakoid membrane</location>
        <topology evidence="1">Multi-pass membrane protein</topology>
    </subcellularLocation>
</comment>
<comment type="similarity">
    <text evidence="1">Belongs to the PsaA/PsaB family.</text>
</comment>
<accession>P58576</accession>
<name>PSAA_NOSS1</name>
<reference key="1">
    <citation type="journal article" date="2001" name="DNA Res.">
        <title>Complete genomic sequence of the filamentous nitrogen-fixing cyanobacterium Anabaena sp. strain PCC 7120.</title>
        <authorList>
            <person name="Kaneko T."/>
            <person name="Nakamura Y."/>
            <person name="Wolk C.P."/>
            <person name="Kuritz T."/>
            <person name="Sasamoto S."/>
            <person name="Watanabe A."/>
            <person name="Iriguchi M."/>
            <person name="Ishikawa A."/>
            <person name="Kawashima K."/>
            <person name="Kimura T."/>
            <person name="Kishida Y."/>
            <person name="Kohara M."/>
            <person name="Matsumoto M."/>
            <person name="Matsuno A."/>
            <person name="Muraki A."/>
            <person name="Nakazaki N."/>
            <person name="Shimpo S."/>
            <person name="Sugimoto M."/>
            <person name="Takazawa M."/>
            <person name="Yamada M."/>
            <person name="Yasuda M."/>
            <person name="Tabata S."/>
        </authorList>
    </citation>
    <scope>NUCLEOTIDE SEQUENCE [LARGE SCALE GENOMIC DNA]</scope>
    <source>
        <strain>PCC 7120 / SAG 25.82 / UTEX 2576</strain>
    </source>
</reference>